<evidence type="ECO:0000250" key="1">
    <source>
        <dbReference type="UniProtKB" id="O64879"/>
    </source>
</evidence>
<evidence type="ECO:0000250" key="2">
    <source>
        <dbReference type="UniProtKB" id="P49235"/>
    </source>
</evidence>
<evidence type="ECO:0000250" key="3">
    <source>
        <dbReference type="UniProtKB" id="Q7XSK0"/>
    </source>
</evidence>
<evidence type="ECO:0000250" key="4">
    <source>
        <dbReference type="UniProtKB" id="Q9SPP9"/>
    </source>
</evidence>
<evidence type="ECO:0000255" key="5"/>
<evidence type="ECO:0000255" key="6">
    <source>
        <dbReference type="PROSITE-ProRule" id="PRU00498"/>
    </source>
</evidence>
<evidence type="ECO:0000303" key="7">
    <source>
    </source>
</evidence>
<evidence type="ECO:0000305" key="8"/>
<evidence type="ECO:0000312" key="9">
    <source>
        <dbReference type="Araport" id="AT2G44480"/>
    </source>
</evidence>
<evidence type="ECO:0000312" key="10">
    <source>
        <dbReference type="EMBL" id="AAC16094.1"/>
    </source>
</evidence>
<accession>O64882</accession>
<accession>B3H6D8</accession>
<accession>Q8GY78</accession>
<gene>
    <name evidence="7" type="primary">BGLU17</name>
    <name evidence="9" type="ordered locus">At2g44480</name>
    <name evidence="10" type="ORF">F4I1.29</name>
</gene>
<feature type="signal peptide" evidence="5">
    <location>
        <begin position="1"/>
        <end position="23"/>
    </location>
</feature>
<feature type="chain" id="PRO_0000389580" description="Beta-glucosidase 17">
    <location>
        <begin position="24"/>
        <end position="517"/>
    </location>
</feature>
<feature type="active site" description="Proton donor" evidence="3">
    <location>
        <position position="204"/>
    </location>
</feature>
<feature type="active site" description="Nucleophile" evidence="3">
    <location>
        <position position="417"/>
    </location>
</feature>
<feature type="binding site" evidence="3">
    <location>
        <position position="54"/>
    </location>
    <ligand>
        <name>a beta-D-glucoside</name>
        <dbReference type="ChEBI" id="CHEBI:22798"/>
    </ligand>
</feature>
<feature type="binding site" evidence="3">
    <location>
        <position position="158"/>
    </location>
    <ligand>
        <name>a beta-D-glucoside</name>
        <dbReference type="ChEBI" id="CHEBI:22798"/>
    </ligand>
</feature>
<feature type="binding site" evidence="3">
    <location>
        <begin position="203"/>
        <end position="204"/>
    </location>
    <ligand>
        <name>a beta-D-glucoside</name>
        <dbReference type="ChEBI" id="CHEBI:22798"/>
    </ligand>
</feature>
<feature type="binding site" evidence="3">
    <location>
        <position position="346"/>
    </location>
    <ligand>
        <name>a beta-D-glucoside</name>
        <dbReference type="ChEBI" id="CHEBI:22798"/>
    </ligand>
</feature>
<feature type="binding site" evidence="4">
    <location>
        <position position="417"/>
    </location>
    <ligand>
        <name>a beta-D-glucoside</name>
        <dbReference type="ChEBI" id="CHEBI:22798"/>
    </ligand>
</feature>
<feature type="binding site" evidence="3">
    <location>
        <position position="466"/>
    </location>
    <ligand>
        <name>a beta-D-glucoside</name>
        <dbReference type="ChEBI" id="CHEBI:22798"/>
    </ligand>
</feature>
<feature type="binding site" evidence="3">
    <location>
        <begin position="473"/>
        <end position="474"/>
    </location>
    <ligand>
        <name>a beta-D-glucoside</name>
        <dbReference type="ChEBI" id="CHEBI:22798"/>
    </ligand>
</feature>
<feature type="binding site" evidence="2">
    <location>
        <position position="482"/>
    </location>
    <ligand>
        <name>a beta-D-glucoside</name>
        <dbReference type="ChEBI" id="CHEBI:22798"/>
    </ligand>
</feature>
<feature type="glycosylation site" description="N-linked (GlcNAc...) asparagine" evidence="6">
    <location>
        <position position="229"/>
    </location>
</feature>
<feature type="glycosylation site" description="N-linked (GlcNAc...) asparagine" evidence="6">
    <location>
        <position position="361"/>
    </location>
</feature>
<feature type="glycosylation site" description="N-linked (GlcNAc...) asparagine" evidence="6">
    <location>
        <position position="371"/>
    </location>
</feature>
<feature type="glycosylation site" description="N-linked (GlcNAc...) asparagine" evidence="6">
    <location>
        <position position="510"/>
    </location>
</feature>
<feature type="disulfide bond" evidence="3">
    <location>
        <begin position="223"/>
        <end position="230"/>
    </location>
</feature>
<feature type="splice variant" id="VSP_038456" description="In isoform 2." evidence="8">
    <location>
        <begin position="1"/>
        <end position="102"/>
    </location>
</feature>
<feature type="sequence conflict" description="In Ref. 3; BAC42451." evidence="8" ref="3">
    <original>E</original>
    <variation>V</variation>
    <location>
        <position position="259"/>
    </location>
</feature>
<protein>
    <recommendedName>
        <fullName evidence="7">Beta-glucosidase 17</fullName>
        <shortName evidence="7">AtBGLU17</shortName>
        <ecNumber evidence="1">3.2.1.21</ecNumber>
    </recommendedName>
</protein>
<keyword id="KW-0025">Alternative splicing</keyword>
<keyword id="KW-1015">Disulfide bond</keyword>
<keyword id="KW-0325">Glycoprotein</keyword>
<keyword id="KW-0326">Glycosidase</keyword>
<keyword id="KW-0378">Hydrolase</keyword>
<keyword id="KW-1185">Reference proteome</keyword>
<keyword id="KW-0732">Signal</keyword>
<comment type="catalytic activity">
    <reaction evidence="1">
        <text>Hydrolysis of terminal, non-reducing beta-D-glucosyl residues with release of beta-D-glucose.</text>
        <dbReference type="EC" id="3.2.1.21"/>
    </reaction>
</comment>
<comment type="alternative products">
    <event type="alternative splicing"/>
    <isoform>
        <id>O64882-1</id>
        <name>1</name>
        <sequence type="displayed"/>
    </isoform>
    <isoform>
        <id>O64882-2</id>
        <name>2</name>
        <sequence type="described" ref="VSP_038456"/>
    </isoform>
</comment>
<comment type="similarity">
    <text evidence="8">Belongs to the glycosyl hydrolase 1 family.</text>
</comment>
<name>BGL17_ARATH</name>
<sequence length="517" mass="59121">MAIKSIFIIIIISIITSISELYALDPSFLRLSTSLQRSSFPQDFRFGAASSAYQSEGAANVDGREPSIWDTFTKQYPEKISDGSNGDVADEFYYRFKEDVAHMKEIGLDSFRFSISWSRILPRGTVAGGVNQAGINFYNHLINELISNGIRPLVTLFHWDTPQALEDEYGGFLNPQIVKDFVEYVDICFKEFGDRVKEWITINEPNMFAVLGYNVGNIAPGRCSSYVQNCTVGNSATEPYLVAHYLILSHAATVQLYREKYQSFHGGTIGMTIQTYWMIPKYNTPACREAAKRALDFFFGWFADPITYGDYPKTMRELVGNRLPKFTKKQSKMVRGSFDFFGLNYYTSRYVEDVMFYANTNLSYTTDSRVNQTTEKNGVPVGEPTSADWLFICPEGFQDVLLYIKSKFQNPVILVTENGMPSENDKSLSVNIALNDEAKIKYHQLHLTALLEAVSQGADVRGYYIWSLMDDFEWEFGYKYRYGLVYVDFQDGLKRHLKSSALWYHHFLSNSSSYQMD</sequence>
<dbReference type="EC" id="3.2.1.21" evidence="1"/>
<dbReference type="EMBL" id="AC004521">
    <property type="protein sequence ID" value="AAC16094.1"/>
    <property type="molecule type" value="Genomic_DNA"/>
</dbReference>
<dbReference type="EMBL" id="CP002685">
    <property type="protein sequence ID" value="AEC10426.1"/>
    <property type="molecule type" value="Genomic_DNA"/>
</dbReference>
<dbReference type="EMBL" id="CP002685">
    <property type="protein sequence ID" value="AEC10427.1"/>
    <property type="molecule type" value="Genomic_DNA"/>
</dbReference>
<dbReference type="EMBL" id="AK117809">
    <property type="protein sequence ID" value="BAC42451.1"/>
    <property type="molecule type" value="mRNA"/>
</dbReference>
<dbReference type="EMBL" id="AY074629">
    <property type="protein sequence ID" value="AAL69445.1"/>
    <property type="molecule type" value="mRNA"/>
</dbReference>
<dbReference type="PIR" id="T02403">
    <property type="entry name" value="T02403"/>
</dbReference>
<dbReference type="RefSeq" id="NP_001118525.1">
    <molecule id="O64882-2"/>
    <property type="nucleotide sequence ID" value="NM_001125053.1"/>
</dbReference>
<dbReference type="RefSeq" id="NP_181976.1">
    <molecule id="O64882-1"/>
    <property type="nucleotide sequence ID" value="NM_130011.3"/>
</dbReference>
<dbReference type="SMR" id="O64882"/>
<dbReference type="FunCoup" id="O64882">
    <property type="interactions" value="428"/>
</dbReference>
<dbReference type="STRING" id="3702.O64882"/>
<dbReference type="CAZy" id="GH1">
    <property type="family name" value="Glycoside Hydrolase Family 1"/>
</dbReference>
<dbReference type="GlyCosmos" id="O64882">
    <property type="glycosylation" value="4 sites, No reported glycans"/>
</dbReference>
<dbReference type="GlyGen" id="O64882">
    <property type="glycosylation" value="4 sites"/>
</dbReference>
<dbReference type="PaxDb" id="3702-AT2G44480.1"/>
<dbReference type="ProteomicsDB" id="240788">
    <molecule id="O64882-1"/>
</dbReference>
<dbReference type="EnsemblPlants" id="AT2G44480.1">
    <molecule id="O64882-1"/>
    <property type="protein sequence ID" value="AT2G44480.1"/>
    <property type="gene ID" value="AT2G44480"/>
</dbReference>
<dbReference type="EnsemblPlants" id="AT2G44480.2">
    <molecule id="O64882-2"/>
    <property type="protein sequence ID" value="AT2G44480.2"/>
    <property type="gene ID" value="AT2G44480"/>
</dbReference>
<dbReference type="GeneID" id="819055"/>
<dbReference type="Gramene" id="AT2G44480.1">
    <molecule id="O64882-1"/>
    <property type="protein sequence ID" value="AT2G44480.1"/>
    <property type="gene ID" value="AT2G44480"/>
</dbReference>
<dbReference type="Gramene" id="AT2G44480.2">
    <molecule id="O64882-2"/>
    <property type="protein sequence ID" value="AT2G44480.2"/>
    <property type="gene ID" value="AT2G44480"/>
</dbReference>
<dbReference type="KEGG" id="ath:AT2G44480"/>
<dbReference type="Araport" id="AT2G44480"/>
<dbReference type="TAIR" id="AT2G44480">
    <property type="gene designation" value="BGLU17"/>
</dbReference>
<dbReference type="eggNOG" id="KOG0626">
    <property type="taxonomic scope" value="Eukaryota"/>
</dbReference>
<dbReference type="HOGENOM" id="CLU_001859_1_0_1"/>
<dbReference type="InParanoid" id="O64882"/>
<dbReference type="PhylomeDB" id="O64882"/>
<dbReference type="PRO" id="PR:O64882"/>
<dbReference type="Proteomes" id="UP000006548">
    <property type="component" value="Chromosome 2"/>
</dbReference>
<dbReference type="ExpressionAtlas" id="O64882">
    <property type="expression patterns" value="baseline and differential"/>
</dbReference>
<dbReference type="GO" id="GO:0008422">
    <property type="term" value="F:beta-glucosidase activity"/>
    <property type="evidence" value="ECO:0007669"/>
    <property type="project" value="UniProtKB-EC"/>
</dbReference>
<dbReference type="GO" id="GO:0005975">
    <property type="term" value="P:carbohydrate metabolic process"/>
    <property type="evidence" value="ECO:0007669"/>
    <property type="project" value="InterPro"/>
</dbReference>
<dbReference type="FunFam" id="3.20.20.80:FF:000022">
    <property type="entry name" value="Beta-glucosidase 11"/>
    <property type="match status" value="1"/>
</dbReference>
<dbReference type="Gene3D" id="3.20.20.80">
    <property type="entry name" value="Glycosidases"/>
    <property type="match status" value="1"/>
</dbReference>
<dbReference type="InterPro" id="IPR001360">
    <property type="entry name" value="Glyco_hydro_1"/>
</dbReference>
<dbReference type="InterPro" id="IPR033132">
    <property type="entry name" value="Glyco_hydro_1_N_CS"/>
</dbReference>
<dbReference type="InterPro" id="IPR017853">
    <property type="entry name" value="Glycoside_hydrolase_SF"/>
</dbReference>
<dbReference type="PANTHER" id="PTHR10353:SF44">
    <property type="entry name" value="BETA-GLUCOSIDASE 17"/>
    <property type="match status" value="1"/>
</dbReference>
<dbReference type="PANTHER" id="PTHR10353">
    <property type="entry name" value="GLYCOSYL HYDROLASE"/>
    <property type="match status" value="1"/>
</dbReference>
<dbReference type="Pfam" id="PF00232">
    <property type="entry name" value="Glyco_hydro_1"/>
    <property type="match status" value="1"/>
</dbReference>
<dbReference type="PRINTS" id="PR00131">
    <property type="entry name" value="GLHYDRLASE1"/>
</dbReference>
<dbReference type="SUPFAM" id="SSF51445">
    <property type="entry name" value="(Trans)glycosidases"/>
    <property type="match status" value="1"/>
</dbReference>
<dbReference type="PROSITE" id="PS00653">
    <property type="entry name" value="GLYCOSYL_HYDROL_F1_2"/>
    <property type="match status" value="1"/>
</dbReference>
<reference key="1">
    <citation type="journal article" date="1999" name="Nature">
        <title>Sequence and analysis of chromosome 2 of the plant Arabidopsis thaliana.</title>
        <authorList>
            <person name="Lin X."/>
            <person name="Kaul S."/>
            <person name="Rounsley S.D."/>
            <person name="Shea T.P."/>
            <person name="Benito M.-I."/>
            <person name="Town C.D."/>
            <person name="Fujii C.Y."/>
            <person name="Mason T.M."/>
            <person name="Bowman C.L."/>
            <person name="Barnstead M.E."/>
            <person name="Feldblyum T.V."/>
            <person name="Buell C.R."/>
            <person name="Ketchum K.A."/>
            <person name="Lee J.J."/>
            <person name="Ronning C.M."/>
            <person name="Koo H.L."/>
            <person name="Moffat K.S."/>
            <person name="Cronin L.A."/>
            <person name="Shen M."/>
            <person name="Pai G."/>
            <person name="Van Aken S."/>
            <person name="Umayam L."/>
            <person name="Tallon L.J."/>
            <person name="Gill J.E."/>
            <person name="Adams M.D."/>
            <person name="Carrera A.J."/>
            <person name="Creasy T.H."/>
            <person name="Goodman H.M."/>
            <person name="Somerville C.R."/>
            <person name="Copenhaver G.P."/>
            <person name="Preuss D."/>
            <person name="Nierman W.C."/>
            <person name="White O."/>
            <person name="Eisen J.A."/>
            <person name="Salzberg S.L."/>
            <person name="Fraser C.M."/>
            <person name="Venter J.C."/>
        </authorList>
    </citation>
    <scope>NUCLEOTIDE SEQUENCE [LARGE SCALE GENOMIC DNA]</scope>
    <source>
        <strain>cv. Columbia</strain>
    </source>
</reference>
<reference key="2">
    <citation type="journal article" date="2017" name="Plant J.">
        <title>Araport11: a complete reannotation of the Arabidopsis thaliana reference genome.</title>
        <authorList>
            <person name="Cheng C.Y."/>
            <person name="Krishnakumar V."/>
            <person name="Chan A.P."/>
            <person name="Thibaud-Nissen F."/>
            <person name="Schobel S."/>
            <person name="Town C.D."/>
        </authorList>
    </citation>
    <scope>GENOME REANNOTATION</scope>
    <source>
        <strain>cv. Columbia</strain>
    </source>
</reference>
<reference key="3">
    <citation type="journal article" date="2002" name="Science">
        <title>Functional annotation of a full-length Arabidopsis cDNA collection.</title>
        <authorList>
            <person name="Seki M."/>
            <person name="Narusaka M."/>
            <person name="Kamiya A."/>
            <person name="Ishida J."/>
            <person name="Satou M."/>
            <person name="Sakurai T."/>
            <person name="Nakajima M."/>
            <person name="Enju A."/>
            <person name="Akiyama K."/>
            <person name="Oono Y."/>
            <person name="Muramatsu M."/>
            <person name="Hayashizaki Y."/>
            <person name="Kawai J."/>
            <person name="Carninci P."/>
            <person name="Itoh M."/>
            <person name="Ishii Y."/>
            <person name="Arakawa T."/>
            <person name="Shibata K."/>
            <person name="Shinagawa A."/>
            <person name="Shinozaki K."/>
        </authorList>
    </citation>
    <scope>NUCLEOTIDE SEQUENCE [LARGE SCALE MRNA] (ISOFORM 1)</scope>
    <source>
        <strain>cv. Columbia</strain>
    </source>
</reference>
<reference key="4">
    <citation type="journal article" date="2003" name="Science">
        <title>Empirical analysis of transcriptional activity in the Arabidopsis genome.</title>
        <authorList>
            <person name="Yamada K."/>
            <person name="Lim J."/>
            <person name="Dale J.M."/>
            <person name="Chen H."/>
            <person name="Shinn P."/>
            <person name="Palm C.J."/>
            <person name="Southwick A.M."/>
            <person name="Wu H.C."/>
            <person name="Kim C.J."/>
            <person name="Nguyen M."/>
            <person name="Pham P.K."/>
            <person name="Cheuk R.F."/>
            <person name="Karlin-Newmann G."/>
            <person name="Liu S.X."/>
            <person name="Lam B."/>
            <person name="Sakano H."/>
            <person name="Wu T."/>
            <person name="Yu G."/>
            <person name="Miranda M."/>
            <person name="Quach H.L."/>
            <person name="Tripp M."/>
            <person name="Chang C.H."/>
            <person name="Lee J.M."/>
            <person name="Toriumi M.J."/>
            <person name="Chan M.M."/>
            <person name="Tang C.C."/>
            <person name="Onodera C.S."/>
            <person name="Deng J.M."/>
            <person name="Akiyama K."/>
            <person name="Ansari Y."/>
            <person name="Arakawa T."/>
            <person name="Banh J."/>
            <person name="Banno F."/>
            <person name="Bowser L."/>
            <person name="Brooks S.Y."/>
            <person name="Carninci P."/>
            <person name="Chao Q."/>
            <person name="Choy N."/>
            <person name="Enju A."/>
            <person name="Goldsmith A.D."/>
            <person name="Gurjal M."/>
            <person name="Hansen N.F."/>
            <person name="Hayashizaki Y."/>
            <person name="Johnson-Hopson C."/>
            <person name="Hsuan V.W."/>
            <person name="Iida K."/>
            <person name="Karnes M."/>
            <person name="Khan S."/>
            <person name="Koesema E."/>
            <person name="Ishida J."/>
            <person name="Jiang P.X."/>
            <person name="Jones T."/>
            <person name="Kawai J."/>
            <person name="Kamiya A."/>
            <person name="Meyers C."/>
            <person name="Nakajima M."/>
            <person name="Narusaka M."/>
            <person name="Seki M."/>
            <person name="Sakurai T."/>
            <person name="Satou M."/>
            <person name="Tamse R."/>
            <person name="Vaysberg M."/>
            <person name="Wallender E.K."/>
            <person name="Wong C."/>
            <person name="Yamamura Y."/>
            <person name="Yuan S."/>
            <person name="Shinozaki K."/>
            <person name="Davis R.W."/>
            <person name="Theologis A."/>
            <person name="Ecker J.R."/>
        </authorList>
    </citation>
    <scope>NUCLEOTIDE SEQUENCE [LARGE SCALE MRNA] (ISOFORM 1)</scope>
    <source>
        <strain>cv. Columbia</strain>
    </source>
</reference>
<reference key="5">
    <citation type="journal article" date="2004" name="Plant Mol. Biol.">
        <title>Functional genomic analysis of Arabidopsis thaliana glycoside hydrolase family 1.</title>
        <authorList>
            <person name="Xu Z."/>
            <person name="Escamilla-Trevino L.L."/>
            <person name="Zeng L."/>
            <person name="Lalgondar M."/>
            <person name="Bevan D.R."/>
            <person name="Winkel B.S.J."/>
            <person name="Mohamed A."/>
            <person name="Cheng C.-L."/>
            <person name="Shih M.-C."/>
            <person name="Poulton J.E."/>
            <person name="Esen A."/>
        </authorList>
    </citation>
    <scope>GENE FAMILY</scope>
    <scope>NOMENCLATURE</scope>
</reference>
<organism>
    <name type="scientific">Arabidopsis thaliana</name>
    <name type="common">Mouse-ear cress</name>
    <dbReference type="NCBI Taxonomy" id="3702"/>
    <lineage>
        <taxon>Eukaryota</taxon>
        <taxon>Viridiplantae</taxon>
        <taxon>Streptophyta</taxon>
        <taxon>Embryophyta</taxon>
        <taxon>Tracheophyta</taxon>
        <taxon>Spermatophyta</taxon>
        <taxon>Magnoliopsida</taxon>
        <taxon>eudicotyledons</taxon>
        <taxon>Gunneridae</taxon>
        <taxon>Pentapetalae</taxon>
        <taxon>rosids</taxon>
        <taxon>malvids</taxon>
        <taxon>Brassicales</taxon>
        <taxon>Brassicaceae</taxon>
        <taxon>Camelineae</taxon>
        <taxon>Arabidopsis</taxon>
    </lineage>
</organism>
<proteinExistence type="evidence at transcript level"/>